<comment type="function">
    <text evidence="1">Cell wall formation. Catalyzes the transfer of a GlcNAc subunit on undecaprenyl-pyrophosphoryl-MurNAc-pentapeptide (lipid intermediate I) to form undecaprenyl-pyrophosphoryl-MurNAc-(pentapeptide)GlcNAc (lipid intermediate II).</text>
</comment>
<comment type="catalytic activity">
    <reaction evidence="1">
        <text>di-trans,octa-cis-undecaprenyl diphospho-N-acetyl-alpha-D-muramoyl-L-alanyl-D-glutamyl-meso-2,6-diaminopimeloyl-D-alanyl-D-alanine + UDP-N-acetyl-alpha-D-glucosamine = di-trans,octa-cis-undecaprenyl diphospho-[N-acetyl-alpha-D-glucosaminyl-(1-&gt;4)]-N-acetyl-alpha-D-muramoyl-L-alanyl-D-glutamyl-meso-2,6-diaminopimeloyl-D-alanyl-D-alanine + UDP + H(+)</text>
        <dbReference type="Rhea" id="RHEA:31227"/>
        <dbReference type="ChEBI" id="CHEBI:15378"/>
        <dbReference type="ChEBI" id="CHEBI:57705"/>
        <dbReference type="ChEBI" id="CHEBI:58223"/>
        <dbReference type="ChEBI" id="CHEBI:61387"/>
        <dbReference type="ChEBI" id="CHEBI:61388"/>
        <dbReference type="EC" id="2.4.1.227"/>
    </reaction>
</comment>
<comment type="pathway">
    <text evidence="1">Cell wall biogenesis; peptidoglycan biosynthesis.</text>
</comment>
<comment type="subcellular location">
    <subcellularLocation>
        <location evidence="1">Cell inner membrane</location>
        <topology evidence="1">Peripheral membrane protein</topology>
        <orientation evidence="1">Cytoplasmic side</orientation>
    </subcellularLocation>
</comment>
<comment type="similarity">
    <text evidence="1">Belongs to the glycosyltransferase 28 family. MurG subfamily.</text>
</comment>
<proteinExistence type="inferred from homology"/>
<reference key="1">
    <citation type="journal article" date="2004" name="J. Bacteriol.">
        <title>Comparative genomics of two Leptospira interrogans serovars reveals novel insights into physiology and pathogenesis.</title>
        <authorList>
            <person name="Nascimento A.L.T.O."/>
            <person name="Ko A.I."/>
            <person name="Martins E.A.L."/>
            <person name="Monteiro-Vitorello C.B."/>
            <person name="Ho P.L."/>
            <person name="Haake D.A."/>
            <person name="Verjovski-Almeida S."/>
            <person name="Hartskeerl R.A."/>
            <person name="Marques M.V."/>
            <person name="Oliveira M.C."/>
            <person name="Menck C.F.M."/>
            <person name="Leite L.C.C."/>
            <person name="Carrer H."/>
            <person name="Coutinho L.L."/>
            <person name="Degrave W.M."/>
            <person name="Dellagostin O.A."/>
            <person name="El-Dorry H."/>
            <person name="Ferro E.S."/>
            <person name="Ferro M.I.T."/>
            <person name="Furlan L.R."/>
            <person name="Gamberini M."/>
            <person name="Giglioti E.A."/>
            <person name="Goes-Neto A."/>
            <person name="Goldman G.H."/>
            <person name="Goldman M.H.S."/>
            <person name="Harakava R."/>
            <person name="Jeronimo S.M.B."/>
            <person name="Junqueira-de-Azevedo I.L.M."/>
            <person name="Kimura E.T."/>
            <person name="Kuramae E.E."/>
            <person name="Lemos E.G.M."/>
            <person name="Lemos M.V.F."/>
            <person name="Marino C.L."/>
            <person name="Nunes L.R."/>
            <person name="de Oliveira R.C."/>
            <person name="Pereira G.G."/>
            <person name="Reis M.S."/>
            <person name="Schriefer A."/>
            <person name="Siqueira W.J."/>
            <person name="Sommer P."/>
            <person name="Tsai S.M."/>
            <person name="Simpson A.J.G."/>
            <person name="Ferro J.A."/>
            <person name="Camargo L.E.A."/>
            <person name="Kitajima J.P."/>
            <person name="Setubal J.C."/>
            <person name="Van Sluys M.A."/>
        </authorList>
    </citation>
    <scope>NUCLEOTIDE SEQUENCE [LARGE SCALE GENOMIC DNA]</scope>
    <source>
        <strain>Fiocruz L1-130</strain>
    </source>
</reference>
<gene>
    <name evidence="1" type="primary">murG</name>
    <name type="ordered locus">LIC_11864</name>
</gene>
<keyword id="KW-0131">Cell cycle</keyword>
<keyword id="KW-0132">Cell division</keyword>
<keyword id="KW-0997">Cell inner membrane</keyword>
<keyword id="KW-1003">Cell membrane</keyword>
<keyword id="KW-0133">Cell shape</keyword>
<keyword id="KW-0961">Cell wall biogenesis/degradation</keyword>
<keyword id="KW-0328">Glycosyltransferase</keyword>
<keyword id="KW-0472">Membrane</keyword>
<keyword id="KW-0573">Peptidoglycan synthesis</keyword>
<keyword id="KW-0808">Transferase</keyword>
<feature type="chain" id="PRO_0000315111" description="UDP-N-acetylglucosamine--N-acetylmuramyl-(pentapeptide) pyrophosphoryl-undecaprenol N-acetylglucosamine transferase">
    <location>
        <begin position="1"/>
        <end position="358"/>
    </location>
</feature>
<feature type="binding site" evidence="1">
    <location>
        <begin position="11"/>
        <end position="13"/>
    </location>
    <ligand>
        <name>UDP-N-acetyl-alpha-D-glucosamine</name>
        <dbReference type="ChEBI" id="CHEBI:57705"/>
    </ligand>
</feature>
<feature type="binding site" evidence="1">
    <location>
        <position position="124"/>
    </location>
    <ligand>
        <name>UDP-N-acetyl-alpha-D-glucosamine</name>
        <dbReference type="ChEBI" id="CHEBI:57705"/>
    </ligand>
</feature>
<feature type="binding site" evidence="1">
    <location>
        <position position="164"/>
    </location>
    <ligand>
        <name>UDP-N-acetyl-alpha-D-glucosamine</name>
        <dbReference type="ChEBI" id="CHEBI:57705"/>
    </ligand>
</feature>
<feature type="binding site" evidence="1">
    <location>
        <position position="195"/>
    </location>
    <ligand>
        <name>UDP-N-acetyl-alpha-D-glucosamine</name>
        <dbReference type="ChEBI" id="CHEBI:57705"/>
    </ligand>
</feature>
<feature type="binding site" evidence="1">
    <location>
        <position position="291"/>
    </location>
    <ligand>
        <name>UDP-N-acetyl-alpha-D-glucosamine</name>
        <dbReference type="ChEBI" id="CHEBI:57705"/>
    </ligand>
</feature>
<sequence length="358" mass="40528">MKSIVIVAGGTGGHISPGVALAEVLTELKEKIGYENLYLYSLVRNKNNPDLEQAPCPVLWHNLPPLSSNFFLFPIRYTIQIIKTFFIFKKLNIDVVIGMGGYSTVSSILYGIFFRKKIYLCEQNTIPGNVNRLFFRFASKVAFSLPPKNSKIPCDYQVLGNPLRKKTIPKMSLKFFEKYDTKKKKQFNVLVMGGSQGARQINNIVIALMSHEEINKQFRFRVLTGSALYEEVSKKSKKDAELISYSDNMKEHYEWANFVIARSGSGVLSECAAFALPMILIPYPYAKDDHQMANAKYFELNGAAIVVDQKDEDESHLFRVLDQMANDVNLLNDMSISSLECSHVDASKDTAKYFFSLD</sequence>
<dbReference type="EC" id="2.4.1.227" evidence="1"/>
<dbReference type="EMBL" id="AE016823">
    <property type="protein sequence ID" value="AAS70450.1"/>
    <property type="molecule type" value="Genomic_DNA"/>
</dbReference>
<dbReference type="RefSeq" id="WP_000836517.1">
    <property type="nucleotide sequence ID" value="NC_005823.1"/>
</dbReference>
<dbReference type="SMR" id="Q72R84"/>
<dbReference type="CAZy" id="GT28">
    <property type="family name" value="Glycosyltransferase Family 28"/>
</dbReference>
<dbReference type="KEGG" id="lic:LIC_11864"/>
<dbReference type="HOGENOM" id="CLU_037404_2_1_12"/>
<dbReference type="UniPathway" id="UPA00219"/>
<dbReference type="Proteomes" id="UP000007037">
    <property type="component" value="Chromosome I"/>
</dbReference>
<dbReference type="GO" id="GO:0005886">
    <property type="term" value="C:plasma membrane"/>
    <property type="evidence" value="ECO:0007669"/>
    <property type="project" value="UniProtKB-SubCell"/>
</dbReference>
<dbReference type="GO" id="GO:0051991">
    <property type="term" value="F:UDP-N-acetyl-D-glucosamine:N-acetylmuramoyl-L-alanyl-D-glutamyl-meso-2,6-diaminopimelyl-D-alanyl-D-alanine-diphosphoundecaprenol 4-beta-N-acetylglucosaminlytransferase activity"/>
    <property type="evidence" value="ECO:0007669"/>
    <property type="project" value="RHEA"/>
</dbReference>
<dbReference type="GO" id="GO:0050511">
    <property type="term" value="F:undecaprenyldiphospho-muramoylpentapeptide beta-N-acetylglucosaminyltransferase activity"/>
    <property type="evidence" value="ECO:0007669"/>
    <property type="project" value="UniProtKB-UniRule"/>
</dbReference>
<dbReference type="GO" id="GO:0005975">
    <property type="term" value="P:carbohydrate metabolic process"/>
    <property type="evidence" value="ECO:0007669"/>
    <property type="project" value="InterPro"/>
</dbReference>
<dbReference type="GO" id="GO:0051301">
    <property type="term" value="P:cell division"/>
    <property type="evidence" value="ECO:0007669"/>
    <property type="project" value="UniProtKB-KW"/>
</dbReference>
<dbReference type="GO" id="GO:0071555">
    <property type="term" value="P:cell wall organization"/>
    <property type="evidence" value="ECO:0007669"/>
    <property type="project" value="UniProtKB-KW"/>
</dbReference>
<dbReference type="GO" id="GO:0030259">
    <property type="term" value="P:lipid glycosylation"/>
    <property type="evidence" value="ECO:0007669"/>
    <property type="project" value="UniProtKB-UniRule"/>
</dbReference>
<dbReference type="GO" id="GO:0009252">
    <property type="term" value="P:peptidoglycan biosynthetic process"/>
    <property type="evidence" value="ECO:0007669"/>
    <property type="project" value="UniProtKB-UniRule"/>
</dbReference>
<dbReference type="GO" id="GO:0008360">
    <property type="term" value="P:regulation of cell shape"/>
    <property type="evidence" value="ECO:0007669"/>
    <property type="project" value="UniProtKB-KW"/>
</dbReference>
<dbReference type="CDD" id="cd03785">
    <property type="entry name" value="GT28_MurG"/>
    <property type="match status" value="1"/>
</dbReference>
<dbReference type="Gene3D" id="3.40.50.2000">
    <property type="entry name" value="Glycogen Phosphorylase B"/>
    <property type="match status" value="2"/>
</dbReference>
<dbReference type="HAMAP" id="MF_00033">
    <property type="entry name" value="MurG"/>
    <property type="match status" value="1"/>
</dbReference>
<dbReference type="InterPro" id="IPR006009">
    <property type="entry name" value="GlcNAc_MurG"/>
</dbReference>
<dbReference type="InterPro" id="IPR007235">
    <property type="entry name" value="Glyco_trans_28_C"/>
</dbReference>
<dbReference type="InterPro" id="IPR004276">
    <property type="entry name" value="GlycoTrans_28_N"/>
</dbReference>
<dbReference type="PANTHER" id="PTHR21015:SF22">
    <property type="entry name" value="GLYCOSYLTRANSFERASE"/>
    <property type="match status" value="1"/>
</dbReference>
<dbReference type="PANTHER" id="PTHR21015">
    <property type="entry name" value="UDP-N-ACETYLGLUCOSAMINE--N-ACETYLMURAMYL-(PENTAPEPTIDE) PYROPHOSPHORYL-UNDECAPRENOL N-ACETYLGLUCOSAMINE TRANSFERASE 1"/>
    <property type="match status" value="1"/>
</dbReference>
<dbReference type="Pfam" id="PF04101">
    <property type="entry name" value="Glyco_tran_28_C"/>
    <property type="match status" value="1"/>
</dbReference>
<dbReference type="Pfam" id="PF03033">
    <property type="entry name" value="Glyco_transf_28"/>
    <property type="match status" value="1"/>
</dbReference>
<dbReference type="SUPFAM" id="SSF53756">
    <property type="entry name" value="UDP-Glycosyltransferase/glycogen phosphorylase"/>
    <property type="match status" value="1"/>
</dbReference>
<accession>Q72R84</accession>
<name>MURG_LEPIC</name>
<evidence type="ECO:0000255" key="1">
    <source>
        <dbReference type="HAMAP-Rule" id="MF_00033"/>
    </source>
</evidence>
<protein>
    <recommendedName>
        <fullName evidence="1">UDP-N-acetylglucosamine--N-acetylmuramyl-(pentapeptide) pyrophosphoryl-undecaprenol N-acetylglucosamine transferase</fullName>
        <ecNumber evidence="1">2.4.1.227</ecNumber>
    </recommendedName>
    <alternativeName>
        <fullName evidence="1">Undecaprenyl-PP-MurNAc-pentapeptide-UDPGlcNAc GlcNAc transferase</fullName>
    </alternativeName>
</protein>
<organism>
    <name type="scientific">Leptospira interrogans serogroup Icterohaemorrhagiae serovar copenhageni (strain Fiocruz L1-130)</name>
    <dbReference type="NCBI Taxonomy" id="267671"/>
    <lineage>
        <taxon>Bacteria</taxon>
        <taxon>Pseudomonadati</taxon>
        <taxon>Spirochaetota</taxon>
        <taxon>Spirochaetia</taxon>
        <taxon>Leptospirales</taxon>
        <taxon>Leptospiraceae</taxon>
        <taxon>Leptospira</taxon>
    </lineage>
</organism>